<proteinExistence type="inferred from homology"/>
<evidence type="ECO:0000255" key="1">
    <source>
        <dbReference type="HAMAP-Rule" id="MF_01270"/>
    </source>
</evidence>
<feature type="chain" id="PRO_0000249996" description="Anhydro-N-acetylmuramic acid kinase">
    <location>
        <begin position="1"/>
        <end position="394"/>
    </location>
</feature>
<feature type="binding site" evidence="1">
    <location>
        <begin position="11"/>
        <end position="18"/>
    </location>
    <ligand>
        <name>ATP</name>
        <dbReference type="ChEBI" id="CHEBI:30616"/>
    </ligand>
</feature>
<name>ANMK_DEIGD</name>
<comment type="function">
    <text evidence="1">Catalyzes the specific phosphorylation of 1,6-anhydro-N-acetylmuramic acid (anhMurNAc) with the simultaneous cleavage of the 1,6-anhydro ring, generating MurNAc-6-P. Is required for the utilization of anhMurNAc either imported from the medium or derived from its own cell wall murein, and thus plays a role in cell wall recycling.</text>
</comment>
<comment type="catalytic activity">
    <reaction evidence="1">
        <text>1,6-anhydro-N-acetyl-beta-muramate + ATP + H2O = N-acetyl-D-muramate 6-phosphate + ADP + H(+)</text>
        <dbReference type="Rhea" id="RHEA:24952"/>
        <dbReference type="ChEBI" id="CHEBI:15377"/>
        <dbReference type="ChEBI" id="CHEBI:15378"/>
        <dbReference type="ChEBI" id="CHEBI:30616"/>
        <dbReference type="ChEBI" id="CHEBI:58690"/>
        <dbReference type="ChEBI" id="CHEBI:58722"/>
        <dbReference type="ChEBI" id="CHEBI:456216"/>
        <dbReference type="EC" id="2.7.1.170"/>
    </reaction>
</comment>
<comment type="pathway">
    <text evidence="1">Amino-sugar metabolism; 1,6-anhydro-N-acetylmuramate degradation.</text>
</comment>
<comment type="pathway">
    <text evidence="1">Cell wall biogenesis; peptidoglycan recycling.</text>
</comment>
<comment type="similarity">
    <text evidence="1">Belongs to the anhydro-N-acetylmuramic acid kinase family.</text>
</comment>
<dbReference type="EC" id="2.7.1.170" evidence="1"/>
<dbReference type="EMBL" id="CP000358">
    <property type="protein sequence ID" value="ABF43942.1"/>
    <property type="molecule type" value="Genomic_DNA"/>
</dbReference>
<dbReference type="RefSeq" id="WP_011526054.1">
    <property type="nucleotide sequence ID" value="NC_008010.2"/>
</dbReference>
<dbReference type="SMR" id="Q1J3J2"/>
<dbReference type="KEGG" id="dge:Dgeo_2508"/>
<dbReference type="eggNOG" id="COG2377">
    <property type="taxonomic scope" value="Bacteria"/>
</dbReference>
<dbReference type="HOGENOM" id="CLU_038782_1_0_0"/>
<dbReference type="UniPathway" id="UPA00343"/>
<dbReference type="UniPathway" id="UPA00544"/>
<dbReference type="Proteomes" id="UP000002431">
    <property type="component" value="Plasmid pDGEO01"/>
</dbReference>
<dbReference type="GO" id="GO:0005524">
    <property type="term" value="F:ATP binding"/>
    <property type="evidence" value="ECO:0007669"/>
    <property type="project" value="UniProtKB-UniRule"/>
</dbReference>
<dbReference type="GO" id="GO:0016301">
    <property type="term" value="F:kinase activity"/>
    <property type="evidence" value="ECO:0007669"/>
    <property type="project" value="UniProtKB-KW"/>
</dbReference>
<dbReference type="GO" id="GO:0016773">
    <property type="term" value="F:phosphotransferase activity, alcohol group as acceptor"/>
    <property type="evidence" value="ECO:0007669"/>
    <property type="project" value="UniProtKB-UniRule"/>
</dbReference>
<dbReference type="GO" id="GO:0097175">
    <property type="term" value="P:1,6-anhydro-N-acetyl-beta-muramic acid catabolic process"/>
    <property type="evidence" value="ECO:0007669"/>
    <property type="project" value="UniProtKB-UniRule"/>
</dbReference>
<dbReference type="GO" id="GO:0006040">
    <property type="term" value="P:amino sugar metabolic process"/>
    <property type="evidence" value="ECO:0007669"/>
    <property type="project" value="InterPro"/>
</dbReference>
<dbReference type="GO" id="GO:0009254">
    <property type="term" value="P:peptidoglycan turnover"/>
    <property type="evidence" value="ECO:0007669"/>
    <property type="project" value="UniProtKB-UniRule"/>
</dbReference>
<dbReference type="Gene3D" id="3.30.420.40">
    <property type="match status" value="2"/>
</dbReference>
<dbReference type="HAMAP" id="MF_01270">
    <property type="entry name" value="AnhMurNAc_kinase"/>
    <property type="match status" value="1"/>
</dbReference>
<dbReference type="InterPro" id="IPR005338">
    <property type="entry name" value="Anhydro_N_Ac-Mur_kinase"/>
</dbReference>
<dbReference type="InterPro" id="IPR043129">
    <property type="entry name" value="ATPase_NBD"/>
</dbReference>
<dbReference type="NCBIfam" id="NF007150">
    <property type="entry name" value="PRK09585.3-5"/>
    <property type="match status" value="1"/>
</dbReference>
<dbReference type="PANTHER" id="PTHR30605">
    <property type="entry name" value="ANHYDRO-N-ACETYLMURAMIC ACID KINASE"/>
    <property type="match status" value="1"/>
</dbReference>
<dbReference type="PANTHER" id="PTHR30605:SF0">
    <property type="entry name" value="ANHYDRO-N-ACETYLMURAMIC ACID KINASE"/>
    <property type="match status" value="1"/>
</dbReference>
<dbReference type="Pfam" id="PF03702">
    <property type="entry name" value="AnmK"/>
    <property type="match status" value="1"/>
</dbReference>
<dbReference type="SUPFAM" id="SSF53067">
    <property type="entry name" value="Actin-like ATPase domain"/>
    <property type="match status" value="1"/>
</dbReference>
<protein>
    <recommendedName>
        <fullName evidence="1">Anhydro-N-acetylmuramic acid kinase</fullName>
        <ecNumber evidence="1">2.7.1.170</ecNumber>
    </recommendedName>
    <alternativeName>
        <fullName evidence="1">AnhMurNAc kinase</fullName>
    </alternativeName>
</protein>
<gene>
    <name evidence="1" type="primary">anmK</name>
    <name type="ordered locus">Dgeo_2508</name>
</gene>
<keyword id="KW-0067">ATP-binding</keyword>
<keyword id="KW-0119">Carbohydrate metabolism</keyword>
<keyword id="KW-0418">Kinase</keyword>
<keyword id="KW-0547">Nucleotide-binding</keyword>
<keyword id="KW-0614">Plasmid</keyword>
<keyword id="KW-0808">Transferase</keyword>
<accession>Q1J3J2</accession>
<reference key="1">
    <citation type="submission" date="2006-04" db="EMBL/GenBank/DDBJ databases">
        <title>Complete sequence of plasmid 1 of Deinococcus geothermalis DSM 11300.</title>
        <authorList>
            <person name="Copeland A."/>
            <person name="Lucas S."/>
            <person name="Lapidus A."/>
            <person name="Barry K."/>
            <person name="Detter J.C."/>
            <person name="Glavina del Rio T."/>
            <person name="Hammon N."/>
            <person name="Israni S."/>
            <person name="Dalin E."/>
            <person name="Tice H."/>
            <person name="Pitluck S."/>
            <person name="Brettin T."/>
            <person name="Bruce D."/>
            <person name="Han C."/>
            <person name="Tapia R."/>
            <person name="Saunders E."/>
            <person name="Gilna P."/>
            <person name="Schmutz J."/>
            <person name="Larimer F."/>
            <person name="Land M."/>
            <person name="Hauser L."/>
            <person name="Kyrpides N."/>
            <person name="Kim E."/>
            <person name="Daly M.J."/>
            <person name="Fredrickson J.K."/>
            <person name="Makarova K.S."/>
            <person name="Gaidamakova E.K."/>
            <person name="Zhai M."/>
            <person name="Richardson P."/>
        </authorList>
    </citation>
    <scope>NUCLEOTIDE SEQUENCE [LARGE SCALE GENOMIC DNA]</scope>
    <source>
        <strain>DSM 11300 / CIP 105573 / AG-3a</strain>
    </source>
</reference>
<sequence>MTPRVLGLMSGTSADGIDAALLELPGWPPTGSGGIFPALSGGVPRGRVAEHVFTPFPPELREAVLAAMQSGLDAADLTQLHWWLGEALAEAAAPLAPHADLIASHGQTVQHHPRPDPRRGWTRPATLQLGEVALIAERTGKPVVADFRPADMAAGGLGAPLVPFADWALFAEGGVRRAIHNLGGISNLTFLPGLDRDEVQAFDTGPGNCLLDEVAALAGQACDEGGRLAAAGQVHTETLAAWLAHPELQVPPPKATGREVWTLARLPRPADLGLPDLAATATAFTARTVADAYARWVVPQGLDEVVVAGGGARNPALLAAIRSALSPLPLRTFTEVGWAAQGLTDATREAAAFAFLGYARAQGWANTLPRTTGARHAVSAGKWLLPPSLPETLA</sequence>
<organism>
    <name type="scientific">Deinococcus geothermalis (strain DSM 11300 / CIP 105573 / AG-3a)</name>
    <dbReference type="NCBI Taxonomy" id="319795"/>
    <lineage>
        <taxon>Bacteria</taxon>
        <taxon>Thermotogati</taxon>
        <taxon>Deinococcota</taxon>
        <taxon>Deinococci</taxon>
        <taxon>Deinococcales</taxon>
        <taxon>Deinococcaceae</taxon>
        <taxon>Deinococcus</taxon>
    </lineage>
</organism>
<geneLocation type="plasmid">
    <name>pDGEO01</name>
</geneLocation>